<proteinExistence type="evidence at transcript level"/>
<protein>
    <recommendedName>
        <fullName>Hyaluronidase-2</fullName>
        <shortName>Hy-2</shortName>
        <ecNumber>3.2.1.35</ecNumber>
    </recommendedName>
    <alternativeName>
        <fullName>Hyaluronoglucosaminidase-2</fullName>
    </alternativeName>
    <alternativeName>
        <fullName>Venom spreading factor</fullName>
    </alternativeName>
</protein>
<evidence type="ECO:0000250" key="1"/>
<evidence type="ECO:0000255" key="2"/>
<evidence type="ECO:0000305" key="3"/>
<feature type="signal peptide" evidence="1">
    <location>
        <begin position="1"/>
        <end position="23"/>
    </location>
</feature>
<feature type="chain" id="PRO_0000420462" description="Hyaluronidase-2">
    <location>
        <begin position="24"/>
        <end position="449"/>
    </location>
</feature>
<feature type="domain" description="EGF-like">
    <location>
        <begin position="427"/>
        <end position="438"/>
    </location>
</feature>
<feature type="active site" description="Proton donor" evidence="1">
    <location>
        <position position="135"/>
    </location>
</feature>
<feature type="glycosylation site" description="N-linked (GlcNAc...) asparagine" evidence="2">
    <location>
        <position position="67"/>
    </location>
</feature>
<feature type="glycosylation site" description="N-linked (GlcNAc...) asparagine" evidence="2">
    <location>
        <position position="103"/>
    </location>
</feature>
<feature type="glycosylation site" description="N-linked (GlcNAc...) asparagine" evidence="2">
    <location>
        <position position="111"/>
    </location>
</feature>
<feature type="glycosylation site" description="N-linked (GlcNAc...) asparagine" evidence="2">
    <location>
        <position position="153"/>
    </location>
</feature>
<feature type="glycosylation site" description="N-linked (GlcNAc...) asparagine" evidence="2">
    <location>
        <position position="357"/>
    </location>
</feature>
<feature type="glycosylation site" description="N-linked (GlcNAc...) asparagine" evidence="2">
    <location>
        <position position="401"/>
    </location>
</feature>
<feature type="disulfide bond" evidence="1">
    <location>
        <begin position="47"/>
        <end position="340"/>
    </location>
</feature>
<feature type="disulfide bond" evidence="1">
    <location>
        <begin position="211"/>
        <end position="227"/>
    </location>
</feature>
<feature type="disulfide bond" evidence="1">
    <location>
        <begin position="365"/>
        <end position="376"/>
    </location>
</feature>
<feature type="disulfide bond" evidence="1">
    <location>
        <begin position="370"/>
        <end position="427"/>
    </location>
</feature>
<feature type="disulfide bond" evidence="1">
    <location>
        <begin position="429"/>
        <end position="438"/>
    </location>
</feature>
<name>HYAL2_BITAR</name>
<dbReference type="EC" id="3.2.1.35"/>
<dbReference type="EMBL" id="DQ840257">
    <property type="protein sequence ID" value="ABI33945.1"/>
    <property type="molecule type" value="mRNA"/>
</dbReference>
<dbReference type="SMR" id="A3QVP0"/>
<dbReference type="GO" id="GO:0031410">
    <property type="term" value="C:cytoplasmic vesicle"/>
    <property type="evidence" value="ECO:0007669"/>
    <property type="project" value="TreeGrafter"/>
</dbReference>
<dbReference type="GO" id="GO:0005576">
    <property type="term" value="C:extracellular region"/>
    <property type="evidence" value="ECO:0007669"/>
    <property type="project" value="UniProtKB-SubCell"/>
</dbReference>
<dbReference type="GO" id="GO:0004415">
    <property type="term" value="F:hyalurononglucosaminidase activity"/>
    <property type="evidence" value="ECO:0007669"/>
    <property type="project" value="UniProtKB-EC"/>
</dbReference>
<dbReference type="GO" id="GO:0005975">
    <property type="term" value="P:carbohydrate metabolic process"/>
    <property type="evidence" value="ECO:0007669"/>
    <property type="project" value="InterPro"/>
</dbReference>
<dbReference type="GO" id="GO:0030214">
    <property type="term" value="P:hyaluronan catabolic process"/>
    <property type="evidence" value="ECO:0007669"/>
    <property type="project" value="TreeGrafter"/>
</dbReference>
<dbReference type="FunFam" id="3.20.20.70:FF:000065">
    <property type="entry name" value="Hyaluronidase"/>
    <property type="match status" value="1"/>
</dbReference>
<dbReference type="Gene3D" id="3.20.20.70">
    <property type="entry name" value="Aldolase class I"/>
    <property type="match status" value="1"/>
</dbReference>
<dbReference type="InterPro" id="IPR013785">
    <property type="entry name" value="Aldolase_TIM"/>
</dbReference>
<dbReference type="InterPro" id="IPR017853">
    <property type="entry name" value="Glycoside_hydrolase_SF"/>
</dbReference>
<dbReference type="InterPro" id="IPR018155">
    <property type="entry name" value="Hyaluronidase"/>
</dbReference>
<dbReference type="PANTHER" id="PTHR11769">
    <property type="entry name" value="HYALURONIDASE"/>
    <property type="match status" value="1"/>
</dbReference>
<dbReference type="PANTHER" id="PTHR11769:SF9">
    <property type="entry name" value="HYALURONIDASE"/>
    <property type="match status" value="1"/>
</dbReference>
<dbReference type="Pfam" id="PF01630">
    <property type="entry name" value="Glyco_hydro_56"/>
    <property type="match status" value="1"/>
</dbReference>
<dbReference type="PIRSF" id="PIRSF038193">
    <property type="entry name" value="Hyaluronidase"/>
    <property type="match status" value="1"/>
</dbReference>
<dbReference type="PRINTS" id="PR00846">
    <property type="entry name" value="GLHYDRLASE56"/>
</dbReference>
<dbReference type="SUPFAM" id="SSF51445">
    <property type="entry name" value="(Trans)glycosidases"/>
    <property type="match status" value="1"/>
</dbReference>
<dbReference type="PROSITE" id="PS00022">
    <property type="entry name" value="EGF_1"/>
    <property type="match status" value="1"/>
</dbReference>
<dbReference type="PROSITE" id="PS01186">
    <property type="entry name" value="EGF_2"/>
    <property type="match status" value="1"/>
</dbReference>
<accession>A3QVP0</accession>
<keyword id="KW-1015">Disulfide bond</keyword>
<keyword id="KW-0245">EGF-like domain</keyword>
<keyword id="KW-0325">Glycoprotein</keyword>
<keyword id="KW-0326">Glycosidase</keyword>
<keyword id="KW-0378">Hydrolase</keyword>
<keyword id="KW-0964">Secreted</keyword>
<keyword id="KW-0732">Signal</keyword>
<sequence>MYHLWIKCLAAWIFLKRCNGVHAMPAKAPMYPNEPFIVLWNAPTTQCPLRYKVDLDLKTFHIVANANDSLSGSVVAIFYPNHLGVYPHIDERGHFFHGIIPQNESLTKHLNKSKSDINRMIPLKTFHGLGVIDWENWRPQWDRNWGSKNVYRNRSIQFAKKLHPELSEDKIKRLAKKEYEKAAKSFMRDTLLLAEEMRPNGYWGYYLYPDCQNYDYKTKGDQYTGKCPDIEMSRNDQLLWLWRDSTALFPNVYLEIILRSSDNALKFVHHRLKESMRIASMAREDYALPVFVYARPFYAYTFEPLTQEDLVTTVGETAAMGAAGIVFWGSMQYASTVDSCQKVKTYMNGPLGRYIVNVTTAAKICSHALCRKNGRCVRKHSDSNAFLHLFPESFRIMVHANATEKKAIVKGKLELKDLIYLRKNFMCQCYQGWKGLYCEEYSIKDIRKI</sequence>
<reference key="1">
    <citation type="journal article" date="2007" name="Gene">
        <title>Identification of cDNAs encoding viper venom hyaluronidases: cross-generic sequence conservation of full-length and unusually short variant transcripts.</title>
        <authorList>
            <person name="Harrison R.A."/>
            <person name="Ibison F."/>
            <person name="Wilbraham D."/>
            <person name="Wagstaff S.C."/>
        </authorList>
    </citation>
    <scope>NUCLEOTIDE SEQUENCE [MRNA]</scope>
    <source>
        <tissue>Venom gland</tissue>
    </source>
</reference>
<comment type="function">
    <text evidence="1">Snake venom endo-hyaluronidase that degrades hyaluronan to smaller oligosaccharide fragments. In venom, it is not toxic by itself, but increases the diffusion of other venom proteins by degrading the extracellular matrix. In addition, it displays antiedematogenic activity (By similarity).</text>
</comment>
<comment type="catalytic activity">
    <reaction>
        <text>Random hydrolysis of (1-&gt;4)-linkages between N-acetyl-beta-D-glucosamine and D-glucuronate residues in hyaluronate.</text>
        <dbReference type="EC" id="3.2.1.35"/>
    </reaction>
</comment>
<comment type="subunit">
    <text evidence="1">Monomer.</text>
</comment>
<comment type="subcellular location">
    <subcellularLocation>
        <location evidence="1">Secreted</location>
    </subcellularLocation>
</comment>
<comment type="tissue specificity">
    <text>Expressed by the venom gland.</text>
</comment>
<comment type="similarity">
    <text evidence="3">Belongs to the glycosyl hydrolase 56 family.</text>
</comment>
<organism>
    <name type="scientific">Bitis arietans</name>
    <name type="common">African puff adder</name>
    <dbReference type="NCBI Taxonomy" id="8692"/>
    <lineage>
        <taxon>Eukaryota</taxon>
        <taxon>Metazoa</taxon>
        <taxon>Chordata</taxon>
        <taxon>Craniata</taxon>
        <taxon>Vertebrata</taxon>
        <taxon>Euteleostomi</taxon>
        <taxon>Lepidosauria</taxon>
        <taxon>Squamata</taxon>
        <taxon>Bifurcata</taxon>
        <taxon>Unidentata</taxon>
        <taxon>Episquamata</taxon>
        <taxon>Toxicofera</taxon>
        <taxon>Serpentes</taxon>
        <taxon>Colubroidea</taxon>
        <taxon>Viperidae</taxon>
        <taxon>Viperinae</taxon>
        <taxon>Bitis</taxon>
    </lineage>
</organism>